<keyword id="KW-0150">Chloroplast</keyword>
<keyword id="KW-0934">Plastid</keyword>
<keyword id="KW-0687">Ribonucleoprotein</keyword>
<keyword id="KW-0689">Ribosomal protein</keyword>
<reference key="1">
    <citation type="journal article" date="1994" name="Plant Mol. Biol.">
        <title>The gene for ribosomal protein L27 is located on the plastid rather than the nuclear genome of the chlorophyll c-containing alga Pleurochrysis carterae.</title>
        <authorList>
            <person name="Fujiwara S."/>
            <person name="Kawachi M."/>
            <person name="Inouye I."/>
            <person name="Someya J."/>
        </authorList>
    </citation>
    <scope>NUCLEOTIDE SEQUENCE [GENOMIC DNA]</scope>
</reference>
<proteinExistence type="inferred from homology"/>
<protein>
    <recommendedName>
        <fullName evidence="1">Large ribosomal subunit protein bL27c</fullName>
    </recommendedName>
    <alternativeName>
        <fullName>50S ribosomal protein L27, chloroplastic</fullName>
    </alternativeName>
</protein>
<accession>P41552</accession>
<geneLocation type="chloroplast"/>
<feature type="chain" id="PRO_0000181225" description="Large ribosomal subunit protein bL27c">
    <location>
        <begin position="1" status="less than"/>
        <end position="74"/>
    </location>
</feature>
<feature type="non-terminal residue">
    <location>
        <position position="1"/>
    </location>
</feature>
<gene>
    <name type="primary">rpl27</name>
</gene>
<comment type="subcellular location">
    <subcellularLocation>
        <location>Plastid</location>
        <location>Chloroplast</location>
    </subcellularLocation>
</comment>
<comment type="similarity">
    <text evidence="1">Belongs to the bacterial ribosomal protein bL27 family.</text>
</comment>
<dbReference type="EMBL" id="D26102">
    <property type="protein sequence ID" value="BAA05098.1"/>
    <property type="molecule type" value="Genomic_DNA"/>
</dbReference>
<dbReference type="SMR" id="P41552"/>
<dbReference type="GO" id="GO:0009507">
    <property type="term" value="C:chloroplast"/>
    <property type="evidence" value="ECO:0007669"/>
    <property type="project" value="UniProtKB-SubCell"/>
</dbReference>
<dbReference type="GO" id="GO:1990904">
    <property type="term" value="C:ribonucleoprotein complex"/>
    <property type="evidence" value="ECO:0007669"/>
    <property type="project" value="UniProtKB-KW"/>
</dbReference>
<dbReference type="GO" id="GO:0005840">
    <property type="term" value="C:ribosome"/>
    <property type="evidence" value="ECO:0007669"/>
    <property type="project" value="UniProtKB-KW"/>
</dbReference>
<dbReference type="GO" id="GO:0003735">
    <property type="term" value="F:structural constituent of ribosome"/>
    <property type="evidence" value="ECO:0007669"/>
    <property type="project" value="InterPro"/>
</dbReference>
<dbReference type="GO" id="GO:0006412">
    <property type="term" value="P:translation"/>
    <property type="evidence" value="ECO:0007669"/>
    <property type="project" value="InterPro"/>
</dbReference>
<dbReference type="FunFam" id="2.40.50.100:FF:000060">
    <property type="entry name" value="Apicoplast ribosomal protein L27"/>
    <property type="match status" value="1"/>
</dbReference>
<dbReference type="Gene3D" id="2.40.50.100">
    <property type="match status" value="1"/>
</dbReference>
<dbReference type="InterPro" id="IPR001684">
    <property type="entry name" value="Ribosomal_bL27"/>
</dbReference>
<dbReference type="InterPro" id="IPR018261">
    <property type="entry name" value="Ribosomal_bL27_CS"/>
</dbReference>
<dbReference type="NCBIfam" id="TIGR00062">
    <property type="entry name" value="L27"/>
    <property type="match status" value="1"/>
</dbReference>
<dbReference type="PANTHER" id="PTHR15893:SF0">
    <property type="entry name" value="LARGE RIBOSOMAL SUBUNIT PROTEIN BL27M"/>
    <property type="match status" value="1"/>
</dbReference>
<dbReference type="PANTHER" id="PTHR15893">
    <property type="entry name" value="RIBOSOMAL PROTEIN L27"/>
    <property type="match status" value="1"/>
</dbReference>
<dbReference type="Pfam" id="PF01016">
    <property type="entry name" value="Ribosomal_L27"/>
    <property type="match status" value="1"/>
</dbReference>
<dbReference type="PRINTS" id="PR00063">
    <property type="entry name" value="RIBOSOMALL27"/>
</dbReference>
<dbReference type="SUPFAM" id="SSF110324">
    <property type="entry name" value="Ribosomal L27 protein-like"/>
    <property type="match status" value="1"/>
</dbReference>
<dbReference type="PROSITE" id="PS00831">
    <property type="entry name" value="RIBOSOMAL_L27"/>
    <property type="match status" value="1"/>
</dbReference>
<sequence>STKNGRDSNSKRLGVKVYGNQPIKKGGIIIRQRGLTFKPGINVAVGKDYTLFALQEGDVKFETIANRKFVSVIK</sequence>
<evidence type="ECO:0000305" key="1"/>
<name>RK27_PLEHA</name>
<organism>
    <name type="scientific">Pleurochrysis haptonemofera</name>
    <name type="common">Unicellular marine alga</name>
    <dbReference type="NCBI Taxonomy" id="35135"/>
    <lineage>
        <taxon>Eukaryota</taxon>
        <taxon>Haptista</taxon>
        <taxon>Haptophyta</taxon>
        <taxon>Prymnesiophyceae</taxon>
        <taxon>Coccolithales</taxon>
        <taxon>Pleurochrysidaceae</taxon>
        <taxon>Pleurochrysis</taxon>
    </lineage>
</organism>